<protein>
    <recommendedName>
        <fullName evidence="1">Ribosomal RNA small subunit methyltransferase B</fullName>
        <ecNumber evidence="1">2.1.1.176</ecNumber>
    </recommendedName>
    <alternativeName>
        <fullName evidence="1">16S rRNA m5C967 methyltransferase</fullName>
    </alternativeName>
    <alternativeName>
        <fullName evidence="1">rRNA (cytosine-C(5)-)-methyltransferase RsmB</fullName>
    </alternativeName>
</protein>
<evidence type="ECO:0000255" key="1">
    <source>
        <dbReference type="HAMAP-Rule" id="MF_01856"/>
    </source>
</evidence>
<reference key="1">
    <citation type="journal article" date="2008" name="J. Bacteriol.">
        <title>The pangenome structure of Escherichia coli: comparative genomic analysis of E. coli commensal and pathogenic isolates.</title>
        <authorList>
            <person name="Rasko D.A."/>
            <person name="Rosovitz M.J."/>
            <person name="Myers G.S.A."/>
            <person name="Mongodin E.F."/>
            <person name="Fricke W.F."/>
            <person name="Gajer P."/>
            <person name="Crabtree J."/>
            <person name="Sebaihia M."/>
            <person name="Thomson N.R."/>
            <person name="Chaudhuri R."/>
            <person name="Henderson I.R."/>
            <person name="Sperandio V."/>
            <person name="Ravel J."/>
        </authorList>
    </citation>
    <scope>NUCLEOTIDE SEQUENCE [LARGE SCALE GENOMIC DNA]</scope>
    <source>
        <strain>HS</strain>
    </source>
</reference>
<feature type="chain" id="PRO_0000366159" description="Ribosomal RNA small subunit methyltransferase B">
    <location>
        <begin position="1"/>
        <end position="429"/>
    </location>
</feature>
<feature type="active site" description="Nucleophile" evidence="1">
    <location>
        <position position="375"/>
    </location>
</feature>
<feature type="binding site" evidence="1">
    <location>
        <begin position="254"/>
        <end position="260"/>
    </location>
    <ligand>
        <name>S-adenosyl-L-methionine</name>
        <dbReference type="ChEBI" id="CHEBI:59789"/>
    </ligand>
</feature>
<feature type="binding site" evidence="1">
    <location>
        <position position="277"/>
    </location>
    <ligand>
        <name>S-adenosyl-L-methionine</name>
        <dbReference type="ChEBI" id="CHEBI:59789"/>
    </ligand>
</feature>
<feature type="binding site" evidence="1">
    <location>
        <position position="303"/>
    </location>
    <ligand>
        <name>S-adenosyl-L-methionine</name>
        <dbReference type="ChEBI" id="CHEBI:59789"/>
    </ligand>
</feature>
<feature type="binding site" evidence="1">
    <location>
        <position position="322"/>
    </location>
    <ligand>
        <name>S-adenosyl-L-methionine</name>
        <dbReference type="ChEBI" id="CHEBI:59789"/>
    </ligand>
</feature>
<sequence length="429" mass="48348">MKKQRNLRSMAAQAVEQVVEQGQSLSNILPPLQQKVSDKDKALLQELCFGVLRTLSQLDWLINKLMARPMTGKQRTVHYLIMVGLYQLLYTRIPPHAALAETVEGAIAIKRPQLKGLINGVLRQFQRQQEELLAEFNASDARYLHPSWLLKRLQKAYPEQWQSIVEANNQRPPMWLRINRTHHSRDSWLALLDEAGMKGFPHADYPDAVRLETPAPVHALPGFEDGWVTVQDASAQGCMTWLAPQNGEHILDLCAAPGGKTTHILEVAPEAQVVAVDIDEQRLSRVYDNLKRLGMKATVKQGDGRYPSQWCGEQQFDRILLDAPCSATGVIRRHPDIKWLRRDRDIPELAQLQSEILDAIWPHLKTGGTLVYATCSVLPEENSLQIKAFLQRTADAELCETGTPEQPGKQNLPGAEEGDGFFYAKLIKK</sequence>
<gene>
    <name evidence="1" type="primary">rsmB</name>
    <name evidence="1" type="synonym">sun</name>
    <name type="ordered locus">EcHS_A3482</name>
</gene>
<keyword id="KW-0963">Cytoplasm</keyword>
<keyword id="KW-0489">Methyltransferase</keyword>
<keyword id="KW-0694">RNA-binding</keyword>
<keyword id="KW-0698">rRNA processing</keyword>
<keyword id="KW-0949">S-adenosyl-L-methionine</keyword>
<keyword id="KW-0808">Transferase</keyword>
<comment type="function">
    <text evidence="1">Specifically methylates the cytosine at position 967 (m5C967) of 16S rRNA.</text>
</comment>
<comment type="catalytic activity">
    <reaction evidence="1">
        <text>cytidine(967) in 16S rRNA + S-adenosyl-L-methionine = 5-methylcytidine(967) in 16S rRNA + S-adenosyl-L-homocysteine + H(+)</text>
        <dbReference type="Rhea" id="RHEA:42748"/>
        <dbReference type="Rhea" id="RHEA-COMP:10219"/>
        <dbReference type="Rhea" id="RHEA-COMP:10220"/>
        <dbReference type="ChEBI" id="CHEBI:15378"/>
        <dbReference type="ChEBI" id="CHEBI:57856"/>
        <dbReference type="ChEBI" id="CHEBI:59789"/>
        <dbReference type="ChEBI" id="CHEBI:74483"/>
        <dbReference type="ChEBI" id="CHEBI:82748"/>
        <dbReference type="EC" id="2.1.1.176"/>
    </reaction>
</comment>
<comment type="subcellular location">
    <subcellularLocation>
        <location evidence="1">Cytoplasm</location>
    </subcellularLocation>
</comment>
<comment type="similarity">
    <text evidence="1">Belongs to the class I-like SAM-binding methyltransferase superfamily. RsmB/NOP family.</text>
</comment>
<organism>
    <name type="scientific">Escherichia coli O9:H4 (strain HS)</name>
    <dbReference type="NCBI Taxonomy" id="331112"/>
    <lineage>
        <taxon>Bacteria</taxon>
        <taxon>Pseudomonadati</taxon>
        <taxon>Pseudomonadota</taxon>
        <taxon>Gammaproteobacteria</taxon>
        <taxon>Enterobacterales</taxon>
        <taxon>Enterobacteriaceae</taxon>
        <taxon>Escherichia</taxon>
    </lineage>
</organism>
<proteinExistence type="inferred from homology"/>
<dbReference type="EC" id="2.1.1.176" evidence="1"/>
<dbReference type="EMBL" id="CP000802">
    <property type="protein sequence ID" value="ABV07697.1"/>
    <property type="molecule type" value="Genomic_DNA"/>
</dbReference>
<dbReference type="RefSeq" id="WP_000744778.1">
    <property type="nucleotide sequence ID" value="NC_009800.1"/>
</dbReference>
<dbReference type="SMR" id="A8A593"/>
<dbReference type="KEGG" id="ecx:EcHS_A3482"/>
<dbReference type="HOGENOM" id="CLU_005316_0_4_6"/>
<dbReference type="GO" id="GO:0005829">
    <property type="term" value="C:cytosol"/>
    <property type="evidence" value="ECO:0007669"/>
    <property type="project" value="TreeGrafter"/>
</dbReference>
<dbReference type="GO" id="GO:0003723">
    <property type="term" value="F:RNA binding"/>
    <property type="evidence" value="ECO:0007669"/>
    <property type="project" value="UniProtKB-KW"/>
</dbReference>
<dbReference type="GO" id="GO:0009383">
    <property type="term" value="F:rRNA (cytosine-C5-)-methyltransferase activity"/>
    <property type="evidence" value="ECO:0007669"/>
    <property type="project" value="TreeGrafter"/>
</dbReference>
<dbReference type="GO" id="GO:0006355">
    <property type="term" value="P:regulation of DNA-templated transcription"/>
    <property type="evidence" value="ECO:0007669"/>
    <property type="project" value="InterPro"/>
</dbReference>
<dbReference type="GO" id="GO:0070475">
    <property type="term" value="P:rRNA base methylation"/>
    <property type="evidence" value="ECO:0007669"/>
    <property type="project" value="TreeGrafter"/>
</dbReference>
<dbReference type="CDD" id="cd02440">
    <property type="entry name" value="AdoMet_MTases"/>
    <property type="match status" value="1"/>
</dbReference>
<dbReference type="CDD" id="cd00620">
    <property type="entry name" value="Methyltransferase_Sun"/>
    <property type="match status" value="1"/>
</dbReference>
<dbReference type="FunFam" id="1.10.287.730:FF:000001">
    <property type="entry name" value="Ribosomal RNA small subunit methyltransferase B"/>
    <property type="match status" value="1"/>
</dbReference>
<dbReference type="FunFam" id="1.10.940.10:FF:000002">
    <property type="entry name" value="Ribosomal RNA small subunit methyltransferase B"/>
    <property type="match status" value="1"/>
</dbReference>
<dbReference type="FunFam" id="3.30.70.1170:FF:000002">
    <property type="entry name" value="Ribosomal RNA small subunit methyltransferase B"/>
    <property type="match status" value="1"/>
</dbReference>
<dbReference type="FunFam" id="3.40.50.150:FF:000022">
    <property type="entry name" value="Ribosomal RNA small subunit methyltransferase B"/>
    <property type="match status" value="1"/>
</dbReference>
<dbReference type="Gene3D" id="1.10.287.730">
    <property type="entry name" value="Helix hairpin bin"/>
    <property type="match status" value="1"/>
</dbReference>
<dbReference type="Gene3D" id="1.10.940.10">
    <property type="entry name" value="NusB-like"/>
    <property type="match status" value="1"/>
</dbReference>
<dbReference type="Gene3D" id="3.30.70.1170">
    <property type="entry name" value="Sun protein, domain 3"/>
    <property type="match status" value="1"/>
</dbReference>
<dbReference type="Gene3D" id="3.40.50.150">
    <property type="entry name" value="Vaccinia Virus protein VP39"/>
    <property type="match status" value="1"/>
</dbReference>
<dbReference type="HAMAP" id="MF_01856">
    <property type="entry name" value="16SrRNA_methyltr_B"/>
    <property type="match status" value="1"/>
</dbReference>
<dbReference type="InterPro" id="IPR049560">
    <property type="entry name" value="MeTrfase_RsmB-F_NOP2_cat"/>
</dbReference>
<dbReference type="InterPro" id="IPR001678">
    <property type="entry name" value="MeTrfase_RsmB-F_NOP2_dom"/>
</dbReference>
<dbReference type="InterPro" id="IPR035926">
    <property type="entry name" value="NusB-like_sf"/>
</dbReference>
<dbReference type="InterPro" id="IPR006027">
    <property type="entry name" value="NusB_RsmB_TIM44"/>
</dbReference>
<dbReference type="InterPro" id="IPR023267">
    <property type="entry name" value="RCMT"/>
</dbReference>
<dbReference type="InterPro" id="IPR004573">
    <property type="entry name" value="rRNA_ssu_MeTfrase_B"/>
</dbReference>
<dbReference type="InterPro" id="IPR023541">
    <property type="entry name" value="rRNA_ssu_MeTfrase_B_ent"/>
</dbReference>
<dbReference type="InterPro" id="IPR054728">
    <property type="entry name" value="RsmB-like_ferredoxin"/>
</dbReference>
<dbReference type="InterPro" id="IPR048019">
    <property type="entry name" value="RsmB-like_N"/>
</dbReference>
<dbReference type="InterPro" id="IPR018314">
    <property type="entry name" value="RsmB/NOL1/NOP2-like_CS"/>
</dbReference>
<dbReference type="InterPro" id="IPR029063">
    <property type="entry name" value="SAM-dependent_MTases_sf"/>
</dbReference>
<dbReference type="NCBIfam" id="NF008149">
    <property type="entry name" value="PRK10901.1"/>
    <property type="match status" value="1"/>
</dbReference>
<dbReference type="NCBIfam" id="NF011494">
    <property type="entry name" value="PRK14902.1"/>
    <property type="match status" value="1"/>
</dbReference>
<dbReference type="NCBIfam" id="TIGR00563">
    <property type="entry name" value="rsmB"/>
    <property type="match status" value="1"/>
</dbReference>
<dbReference type="PANTHER" id="PTHR22807:SF61">
    <property type="entry name" value="NOL1_NOP2_SUN FAMILY PROTEIN _ ANTITERMINATION NUSB DOMAIN-CONTAINING PROTEIN"/>
    <property type="match status" value="1"/>
</dbReference>
<dbReference type="PANTHER" id="PTHR22807">
    <property type="entry name" value="NOP2 YEAST -RELATED NOL1/NOP2/FMU SUN DOMAIN-CONTAINING"/>
    <property type="match status" value="1"/>
</dbReference>
<dbReference type="Pfam" id="PF01189">
    <property type="entry name" value="Methyltr_RsmB-F"/>
    <property type="match status" value="1"/>
</dbReference>
<dbReference type="Pfam" id="PF01029">
    <property type="entry name" value="NusB"/>
    <property type="match status" value="1"/>
</dbReference>
<dbReference type="Pfam" id="PF22458">
    <property type="entry name" value="RsmF-B_ferredox"/>
    <property type="match status" value="1"/>
</dbReference>
<dbReference type="PRINTS" id="PR02008">
    <property type="entry name" value="RCMTFAMILY"/>
</dbReference>
<dbReference type="SUPFAM" id="SSF48013">
    <property type="entry name" value="NusB-like"/>
    <property type="match status" value="1"/>
</dbReference>
<dbReference type="SUPFAM" id="SSF53335">
    <property type="entry name" value="S-adenosyl-L-methionine-dependent methyltransferases"/>
    <property type="match status" value="1"/>
</dbReference>
<dbReference type="PROSITE" id="PS01153">
    <property type="entry name" value="NOL1_NOP2_SUN"/>
    <property type="match status" value="1"/>
</dbReference>
<dbReference type="PROSITE" id="PS51686">
    <property type="entry name" value="SAM_MT_RSMB_NOP"/>
    <property type="match status" value="1"/>
</dbReference>
<accession>A8A593</accession>
<name>RSMB_ECOHS</name>